<organism>
    <name type="scientific">Bordetella petrii (strain ATCC BAA-461 / DSM 12804 / CCUG 43448)</name>
    <dbReference type="NCBI Taxonomy" id="340100"/>
    <lineage>
        <taxon>Bacteria</taxon>
        <taxon>Pseudomonadati</taxon>
        <taxon>Pseudomonadota</taxon>
        <taxon>Betaproteobacteria</taxon>
        <taxon>Burkholderiales</taxon>
        <taxon>Alcaligenaceae</taxon>
        <taxon>Bordetella</taxon>
    </lineage>
</organism>
<accession>A9IPU1</accession>
<protein>
    <recommendedName>
        <fullName evidence="1">Large ribosomal subunit protein bL20</fullName>
    </recommendedName>
    <alternativeName>
        <fullName evidence="2">50S ribosomal protein L20</fullName>
    </alternativeName>
</protein>
<reference key="1">
    <citation type="journal article" date="2008" name="BMC Genomics">
        <title>The missing link: Bordetella petrii is endowed with both the metabolic versatility of environmental bacteria and virulence traits of pathogenic Bordetellae.</title>
        <authorList>
            <person name="Gross R."/>
            <person name="Guzman C.A."/>
            <person name="Sebaihia M."/>
            <person name="Martin dos Santos V.A.P."/>
            <person name="Pieper D.H."/>
            <person name="Koebnik R."/>
            <person name="Lechner M."/>
            <person name="Bartels D."/>
            <person name="Buhrmester J."/>
            <person name="Choudhuri J.V."/>
            <person name="Ebensen T."/>
            <person name="Gaigalat L."/>
            <person name="Herrmann S."/>
            <person name="Khachane A.N."/>
            <person name="Larisch C."/>
            <person name="Link S."/>
            <person name="Linke B."/>
            <person name="Meyer F."/>
            <person name="Mormann S."/>
            <person name="Nakunst D."/>
            <person name="Rueckert C."/>
            <person name="Schneiker-Bekel S."/>
            <person name="Schulze K."/>
            <person name="Voerholter F.-J."/>
            <person name="Yevsa T."/>
            <person name="Engle J.T."/>
            <person name="Goldman W.E."/>
            <person name="Puehler A."/>
            <person name="Goebel U.B."/>
            <person name="Goesmann A."/>
            <person name="Bloecker H."/>
            <person name="Kaiser O."/>
            <person name="Martinez-Arias R."/>
        </authorList>
    </citation>
    <scope>NUCLEOTIDE SEQUENCE [LARGE SCALE GENOMIC DNA]</scope>
    <source>
        <strain>ATCC BAA-461 / DSM 12804 / CCUG 43448</strain>
    </source>
</reference>
<dbReference type="EMBL" id="AM902716">
    <property type="protein sequence ID" value="CAP42984.1"/>
    <property type="molecule type" value="Genomic_DNA"/>
</dbReference>
<dbReference type="SMR" id="A9IPU1"/>
<dbReference type="STRING" id="94624.Bpet2642"/>
<dbReference type="KEGG" id="bpt:Bpet2642"/>
<dbReference type="eggNOG" id="COG0292">
    <property type="taxonomic scope" value="Bacteria"/>
</dbReference>
<dbReference type="Proteomes" id="UP000001225">
    <property type="component" value="Chromosome"/>
</dbReference>
<dbReference type="GO" id="GO:1990904">
    <property type="term" value="C:ribonucleoprotein complex"/>
    <property type="evidence" value="ECO:0007669"/>
    <property type="project" value="UniProtKB-KW"/>
</dbReference>
<dbReference type="GO" id="GO:0005840">
    <property type="term" value="C:ribosome"/>
    <property type="evidence" value="ECO:0007669"/>
    <property type="project" value="UniProtKB-KW"/>
</dbReference>
<dbReference type="GO" id="GO:0019843">
    <property type="term" value="F:rRNA binding"/>
    <property type="evidence" value="ECO:0007669"/>
    <property type="project" value="UniProtKB-UniRule"/>
</dbReference>
<dbReference type="GO" id="GO:0003735">
    <property type="term" value="F:structural constituent of ribosome"/>
    <property type="evidence" value="ECO:0007669"/>
    <property type="project" value="InterPro"/>
</dbReference>
<dbReference type="GO" id="GO:0000027">
    <property type="term" value="P:ribosomal large subunit assembly"/>
    <property type="evidence" value="ECO:0007669"/>
    <property type="project" value="UniProtKB-UniRule"/>
</dbReference>
<dbReference type="GO" id="GO:0006412">
    <property type="term" value="P:translation"/>
    <property type="evidence" value="ECO:0007669"/>
    <property type="project" value="InterPro"/>
</dbReference>
<dbReference type="CDD" id="cd07026">
    <property type="entry name" value="Ribosomal_L20"/>
    <property type="match status" value="1"/>
</dbReference>
<dbReference type="FunFam" id="1.10.1900.20:FF:000001">
    <property type="entry name" value="50S ribosomal protein L20"/>
    <property type="match status" value="1"/>
</dbReference>
<dbReference type="Gene3D" id="6.10.160.10">
    <property type="match status" value="1"/>
</dbReference>
<dbReference type="Gene3D" id="1.10.1900.20">
    <property type="entry name" value="Ribosomal protein L20"/>
    <property type="match status" value="1"/>
</dbReference>
<dbReference type="HAMAP" id="MF_00382">
    <property type="entry name" value="Ribosomal_bL20"/>
    <property type="match status" value="1"/>
</dbReference>
<dbReference type="InterPro" id="IPR005813">
    <property type="entry name" value="Ribosomal_bL20"/>
</dbReference>
<dbReference type="InterPro" id="IPR049946">
    <property type="entry name" value="RIBOSOMAL_L20_CS"/>
</dbReference>
<dbReference type="InterPro" id="IPR035566">
    <property type="entry name" value="Ribosomal_protein_bL20_C"/>
</dbReference>
<dbReference type="NCBIfam" id="TIGR01032">
    <property type="entry name" value="rplT_bact"/>
    <property type="match status" value="1"/>
</dbReference>
<dbReference type="PANTHER" id="PTHR10986">
    <property type="entry name" value="39S RIBOSOMAL PROTEIN L20"/>
    <property type="match status" value="1"/>
</dbReference>
<dbReference type="Pfam" id="PF00453">
    <property type="entry name" value="Ribosomal_L20"/>
    <property type="match status" value="1"/>
</dbReference>
<dbReference type="PRINTS" id="PR00062">
    <property type="entry name" value="RIBOSOMALL20"/>
</dbReference>
<dbReference type="SUPFAM" id="SSF74731">
    <property type="entry name" value="Ribosomal protein L20"/>
    <property type="match status" value="1"/>
</dbReference>
<dbReference type="PROSITE" id="PS00937">
    <property type="entry name" value="RIBOSOMAL_L20"/>
    <property type="match status" value="1"/>
</dbReference>
<keyword id="KW-0687">Ribonucleoprotein</keyword>
<keyword id="KW-0689">Ribosomal protein</keyword>
<keyword id="KW-0694">RNA-binding</keyword>
<keyword id="KW-0699">rRNA-binding</keyword>
<gene>
    <name evidence="1" type="primary">rplT</name>
    <name type="ordered locus">Bpet2642</name>
</gene>
<sequence>MPRVKRGVTARARHKKVIAAAKGYRGRRGNVFRIAKQAVMRAGQYAYRDRRNKKRTFRALWITRINAAVREQGMSYSVFIAGLKKASIDLDRKVLADLAVRDKAGFAAIVQQAKAALSA</sequence>
<proteinExistence type="inferred from homology"/>
<evidence type="ECO:0000255" key="1">
    <source>
        <dbReference type="HAMAP-Rule" id="MF_00382"/>
    </source>
</evidence>
<evidence type="ECO:0000305" key="2"/>
<feature type="chain" id="PRO_1000122279" description="Large ribosomal subunit protein bL20">
    <location>
        <begin position="1"/>
        <end position="119"/>
    </location>
</feature>
<comment type="function">
    <text evidence="1">Binds directly to 23S ribosomal RNA and is necessary for the in vitro assembly process of the 50S ribosomal subunit. It is not involved in the protein synthesizing functions of that subunit.</text>
</comment>
<comment type="similarity">
    <text evidence="1">Belongs to the bacterial ribosomal protein bL20 family.</text>
</comment>
<name>RL20_BORPD</name>